<evidence type="ECO:0000255" key="1">
    <source>
        <dbReference type="HAMAP-Rule" id="MF_00339"/>
    </source>
</evidence>
<organism>
    <name type="scientific">Streptococcus pyogenes serotype M49 (strain NZ131)</name>
    <dbReference type="NCBI Taxonomy" id="471876"/>
    <lineage>
        <taxon>Bacteria</taxon>
        <taxon>Bacillati</taxon>
        <taxon>Bacillota</taxon>
        <taxon>Bacilli</taxon>
        <taxon>Lactobacillales</taxon>
        <taxon>Streptococcaceae</taxon>
        <taxon>Streptococcus</taxon>
    </lineage>
</organism>
<name>PFKA_STRPZ</name>
<gene>
    <name evidence="1" type="primary">pfkA</name>
    <name type="ordered locus">Spy49_1018c</name>
</gene>
<dbReference type="EC" id="2.7.1.11" evidence="1"/>
<dbReference type="EMBL" id="CP000829">
    <property type="protein sequence ID" value="ACI61318.1"/>
    <property type="molecule type" value="Genomic_DNA"/>
</dbReference>
<dbReference type="SMR" id="B5XLV6"/>
<dbReference type="KEGG" id="soz:Spy49_1018c"/>
<dbReference type="HOGENOM" id="CLU_020655_0_1_9"/>
<dbReference type="UniPathway" id="UPA00109">
    <property type="reaction ID" value="UER00182"/>
</dbReference>
<dbReference type="Proteomes" id="UP000001039">
    <property type="component" value="Chromosome"/>
</dbReference>
<dbReference type="GO" id="GO:0005945">
    <property type="term" value="C:6-phosphofructokinase complex"/>
    <property type="evidence" value="ECO:0007669"/>
    <property type="project" value="TreeGrafter"/>
</dbReference>
<dbReference type="GO" id="GO:0003872">
    <property type="term" value="F:6-phosphofructokinase activity"/>
    <property type="evidence" value="ECO:0007669"/>
    <property type="project" value="UniProtKB-UniRule"/>
</dbReference>
<dbReference type="GO" id="GO:0016208">
    <property type="term" value="F:AMP binding"/>
    <property type="evidence" value="ECO:0007669"/>
    <property type="project" value="TreeGrafter"/>
</dbReference>
<dbReference type="GO" id="GO:0005524">
    <property type="term" value="F:ATP binding"/>
    <property type="evidence" value="ECO:0007669"/>
    <property type="project" value="UniProtKB-KW"/>
</dbReference>
<dbReference type="GO" id="GO:0070095">
    <property type="term" value="F:fructose-6-phosphate binding"/>
    <property type="evidence" value="ECO:0007669"/>
    <property type="project" value="TreeGrafter"/>
</dbReference>
<dbReference type="GO" id="GO:0042802">
    <property type="term" value="F:identical protein binding"/>
    <property type="evidence" value="ECO:0007669"/>
    <property type="project" value="TreeGrafter"/>
</dbReference>
<dbReference type="GO" id="GO:0046872">
    <property type="term" value="F:metal ion binding"/>
    <property type="evidence" value="ECO:0007669"/>
    <property type="project" value="UniProtKB-KW"/>
</dbReference>
<dbReference type="GO" id="GO:0048029">
    <property type="term" value="F:monosaccharide binding"/>
    <property type="evidence" value="ECO:0007669"/>
    <property type="project" value="TreeGrafter"/>
</dbReference>
<dbReference type="GO" id="GO:0061621">
    <property type="term" value="P:canonical glycolysis"/>
    <property type="evidence" value="ECO:0007669"/>
    <property type="project" value="TreeGrafter"/>
</dbReference>
<dbReference type="GO" id="GO:0030388">
    <property type="term" value="P:fructose 1,6-bisphosphate metabolic process"/>
    <property type="evidence" value="ECO:0007669"/>
    <property type="project" value="TreeGrafter"/>
</dbReference>
<dbReference type="GO" id="GO:0006002">
    <property type="term" value="P:fructose 6-phosphate metabolic process"/>
    <property type="evidence" value="ECO:0007669"/>
    <property type="project" value="InterPro"/>
</dbReference>
<dbReference type="FunFam" id="3.40.50.450:FF:000001">
    <property type="entry name" value="ATP-dependent 6-phosphofructokinase"/>
    <property type="match status" value="1"/>
</dbReference>
<dbReference type="FunFam" id="3.40.50.460:FF:000002">
    <property type="entry name" value="ATP-dependent 6-phosphofructokinase"/>
    <property type="match status" value="1"/>
</dbReference>
<dbReference type="Gene3D" id="3.40.50.450">
    <property type="match status" value="1"/>
</dbReference>
<dbReference type="Gene3D" id="3.40.50.460">
    <property type="entry name" value="Phosphofructokinase domain"/>
    <property type="match status" value="1"/>
</dbReference>
<dbReference type="HAMAP" id="MF_00339">
    <property type="entry name" value="Phosphofructokinase_I_B1"/>
    <property type="match status" value="1"/>
</dbReference>
<dbReference type="InterPro" id="IPR022953">
    <property type="entry name" value="ATP_PFK"/>
</dbReference>
<dbReference type="InterPro" id="IPR012003">
    <property type="entry name" value="ATP_PFK_prok-type"/>
</dbReference>
<dbReference type="InterPro" id="IPR012828">
    <property type="entry name" value="PFKA_ATP_prok"/>
</dbReference>
<dbReference type="InterPro" id="IPR015912">
    <property type="entry name" value="Phosphofructokinase_CS"/>
</dbReference>
<dbReference type="InterPro" id="IPR000023">
    <property type="entry name" value="Phosphofructokinase_dom"/>
</dbReference>
<dbReference type="InterPro" id="IPR035966">
    <property type="entry name" value="PKF_sf"/>
</dbReference>
<dbReference type="NCBIfam" id="TIGR02482">
    <property type="entry name" value="PFKA_ATP"/>
    <property type="match status" value="1"/>
</dbReference>
<dbReference type="NCBIfam" id="NF002872">
    <property type="entry name" value="PRK03202.1"/>
    <property type="match status" value="1"/>
</dbReference>
<dbReference type="PANTHER" id="PTHR13697:SF4">
    <property type="entry name" value="ATP-DEPENDENT 6-PHOSPHOFRUCTOKINASE"/>
    <property type="match status" value="1"/>
</dbReference>
<dbReference type="PANTHER" id="PTHR13697">
    <property type="entry name" value="PHOSPHOFRUCTOKINASE"/>
    <property type="match status" value="1"/>
</dbReference>
<dbReference type="Pfam" id="PF00365">
    <property type="entry name" value="PFK"/>
    <property type="match status" value="1"/>
</dbReference>
<dbReference type="PIRSF" id="PIRSF000532">
    <property type="entry name" value="ATP_PFK_prok"/>
    <property type="match status" value="1"/>
</dbReference>
<dbReference type="PRINTS" id="PR00476">
    <property type="entry name" value="PHFRCTKINASE"/>
</dbReference>
<dbReference type="SUPFAM" id="SSF53784">
    <property type="entry name" value="Phosphofructokinase"/>
    <property type="match status" value="1"/>
</dbReference>
<dbReference type="PROSITE" id="PS00433">
    <property type="entry name" value="PHOSPHOFRUCTOKINASE"/>
    <property type="match status" value="1"/>
</dbReference>
<accession>B5XLV6</accession>
<feature type="chain" id="PRO_1000120063" description="ATP-dependent 6-phosphofructokinase">
    <location>
        <begin position="1"/>
        <end position="337"/>
    </location>
</feature>
<feature type="active site" description="Proton acceptor" evidence="1">
    <location>
        <position position="127"/>
    </location>
</feature>
<feature type="binding site" evidence="1">
    <location>
        <position position="11"/>
    </location>
    <ligand>
        <name>ATP</name>
        <dbReference type="ChEBI" id="CHEBI:30616"/>
    </ligand>
</feature>
<feature type="binding site" evidence="1">
    <location>
        <begin position="21"/>
        <end position="25"/>
    </location>
    <ligand>
        <name>ADP</name>
        <dbReference type="ChEBI" id="CHEBI:456216"/>
        <note>allosteric activator; ligand shared between dimeric partners</note>
    </ligand>
</feature>
<feature type="binding site" evidence="1">
    <location>
        <begin position="72"/>
        <end position="73"/>
    </location>
    <ligand>
        <name>ATP</name>
        <dbReference type="ChEBI" id="CHEBI:30616"/>
    </ligand>
</feature>
<feature type="binding site" evidence="1">
    <location>
        <begin position="102"/>
        <end position="105"/>
    </location>
    <ligand>
        <name>ATP</name>
        <dbReference type="ChEBI" id="CHEBI:30616"/>
    </ligand>
</feature>
<feature type="binding site" evidence="1">
    <location>
        <position position="103"/>
    </location>
    <ligand>
        <name>Mg(2+)</name>
        <dbReference type="ChEBI" id="CHEBI:18420"/>
        <note>catalytic</note>
    </ligand>
</feature>
<feature type="binding site" description="in other chain" evidence="1">
    <location>
        <begin position="125"/>
        <end position="127"/>
    </location>
    <ligand>
        <name>substrate</name>
        <note>ligand shared between dimeric partners</note>
    </ligand>
</feature>
<feature type="binding site" description="in other chain" evidence="1">
    <location>
        <position position="154"/>
    </location>
    <ligand>
        <name>ADP</name>
        <dbReference type="ChEBI" id="CHEBI:456216"/>
        <note>allosteric activator; ligand shared between dimeric partners</note>
    </ligand>
</feature>
<feature type="binding site" evidence="1">
    <location>
        <position position="162"/>
    </location>
    <ligand>
        <name>substrate</name>
        <note>ligand shared between dimeric partners</note>
    </ligand>
</feature>
<feature type="binding site" description="in other chain" evidence="1">
    <location>
        <begin position="169"/>
        <end position="171"/>
    </location>
    <ligand>
        <name>substrate</name>
        <note>ligand shared between dimeric partners</note>
    </ligand>
</feature>
<feature type="binding site" description="in other chain" evidence="1">
    <location>
        <begin position="185"/>
        <end position="187"/>
    </location>
    <ligand>
        <name>ADP</name>
        <dbReference type="ChEBI" id="CHEBI:456216"/>
        <note>allosteric activator; ligand shared between dimeric partners</note>
    </ligand>
</feature>
<feature type="binding site" description="in other chain" evidence="1">
    <location>
        <position position="212"/>
    </location>
    <ligand>
        <name>ADP</name>
        <dbReference type="ChEBI" id="CHEBI:456216"/>
        <note>allosteric activator; ligand shared between dimeric partners</note>
    </ligand>
</feature>
<feature type="binding site" description="in other chain" evidence="1">
    <location>
        <begin position="214"/>
        <end position="216"/>
    </location>
    <ligand>
        <name>ADP</name>
        <dbReference type="ChEBI" id="CHEBI:456216"/>
        <note>allosteric activator; ligand shared between dimeric partners</note>
    </ligand>
</feature>
<feature type="binding site" description="in other chain" evidence="1">
    <location>
        <position position="223"/>
    </location>
    <ligand>
        <name>substrate</name>
        <note>ligand shared between dimeric partners</note>
    </ligand>
</feature>
<feature type="binding site" evidence="1">
    <location>
        <position position="245"/>
    </location>
    <ligand>
        <name>substrate</name>
        <note>ligand shared between dimeric partners</note>
    </ligand>
</feature>
<feature type="binding site" description="in other chain" evidence="1">
    <location>
        <begin position="251"/>
        <end position="254"/>
    </location>
    <ligand>
        <name>substrate</name>
        <note>ligand shared between dimeric partners</note>
    </ligand>
</feature>
<keyword id="KW-0021">Allosteric enzyme</keyword>
<keyword id="KW-0067">ATP-binding</keyword>
<keyword id="KW-0963">Cytoplasm</keyword>
<keyword id="KW-0324">Glycolysis</keyword>
<keyword id="KW-0418">Kinase</keyword>
<keyword id="KW-0460">Magnesium</keyword>
<keyword id="KW-0479">Metal-binding</keyword>
<keyword id="KW-0547">Nucleotide-binding</keyword>
<keyword id="KW-0808">Transferase</keyword>
<proteinExistence type="inferred from homology"/>
<sequence>MKRIAVLTSGGDAPGMNAAIRAVVRKAISEGMEVYGINRGYAGMVDGDIFPLGSKEVGDKISRGGTFLYSARYPEFAQLEGQLAGIEQLKKHGIEGVVVIGGDGSYHGAMRLTEHGFPAVGIPGTIDNDIAGTDYTIGFDTAVNTAVEAIDKLRDTSSSHGRTFVVEVMGRNAGDIALWAGIASGADQIIVPEEEFDIEKVASTIQYDFEHKGKNHHIIVLAEGVMSGEAFAQKLKEAGDKSDLRVTNLGHILRGGSPTARDRVIASWMGSHAVELLKEGKGGLAVGIHNEELVESPILGTAEEGALFSLTEEGKIIVNNPHKARLDFAALNRSLSQ</sequence>
<comment type="function">
    <text evidence="1">Catalyzes the phosphorylation of D-fructose 6-phosphate to fructose 1,6-bisphosphate by ATP, the first committing step of glycolysis.</text>
</comment>
<comment type="catalytic activity">
    <reaction evidence="1">
        <text>beta-D-fructose 6-phosphate + ATP = beta-D-fructose 1,6-bisphosphate + ADP + H(+)</text>
        <dbReference type="Rhea" id="RHEA:16109"/>
        <dbReference type="ChEBI" id="CHEBI:15378"/>
        <dbReference type="ChEBI" id="CHEBI:30616"/>
        <dbReference type="ChEBI" id="CHEBI:32966"/>
        <dbReference type="ChEBI" id="CHEBI:57634"/>
        <dbReference type="ChEBI" id="CHEBI:456216"/>
        <dbReference type="EC" id="2.7.1.11"/>
    </reaction>
</comment>
<comment type="cofactor">
    <cofactor evidence="1">
        <name>Mg(2+)</name>
        <dbReference type="ChEBI" id="CHEBI:18420"/>
    </cofactor>
</comment>
<comment type="activity regulation">
    <text evidence="1">Allosterically activated by ADP and other diphosphonucleosides, and allosterically inhibited by phosphoenolpyruvate.</text>
</comment>
<comment type="pathway">
    <text evidence="1">Carbohydrate degradation; glycolysis; D-glyceraldehyde 3-phosphate and glycerone phosphate from D-glucose: step 3/4.</text>
</comment>
<comment type="subunit">
    <text evidence="1">Homotetramer.</text>
</comment>
<comment type="subcellular location">
    <subcellularLocation>
        <location evidence="1">Cytoplasm</location>
    </subcellularLocation>
</comment>
<comment type="similarity">
    <text evidence="1">Belongs to the phosphofructokinase type A (PFKA) family. ATP-dependent PFK group I subfamily. Prokaryotic clade 'B1' sub-subfamily.</text>
</comment>
<reference key="1">
    <citation type="journal article" date="2008" name="J. Bacteriol.">
        <title>Genome sequence of a nephritogenic and highly transformable M49 strain of Streptococcus pyogenes.</title>
        <authorList>
            <person name="McShan W.M."/>
            <person name="Ferretti J.J."/>
            <person name="Karasawa T."/>
            <person name="Suvorov A.N."/>
            <person name="Lin S."/>
            <person name="Qin B."/>
            <person name="Jia H."/>
            <person name="Kenton S."/>
            <person name="Najar F."/>
            <person name="Wu H."/>
            <person name="Scott J."/>
            <person name="Roe B.A."/>
            <person name="Savic D.J."/>
        </authorList>
    </citation>
    <scope>NUCLEOTIDE SEQUENCE [LARGE SCALE GENOMIC DNA]</scope>
    <source>
        <strain>NZ131</strain>
    </source>
</reference>
<protein>
    <recommendedName>
        <fullName evidence="1">ATP-dependent 6-phosphofructokinase</fullName>
        <shortName evidence="1">ATP-PFK</shortName>
        <shortName evidence="1">Phosphofructokinase</shortName>
        <ecNumber evidence="1">2.7.1.11</ecNumber>
    </recommendedName>
    <alternativeName>
        <fullName evidence="1">Phosphohexokinase</fullName>
    </alternativeName>
</protein>